<evidence type="ECO:0000250" key="1"/>
<evidence type="ECO:0000250" key="2">
    <source>
        <dbReference type="UniProtKB" id="P13674"/>
    </source>
</evidence>
<evidence type="ECO:0000255" key="3"/>
<evidence type="ECO:0000255" key="4">
    <source>
        <dbReference type="PROSITE-ProRule" id="PRU00805"/>
    </source>
</evidence>
<evidence type="ECO:0000305" key="5"/>
<accession>Q5RAG8</accession>
<keyword id="KW-0223">Dioxygenase</keyword>
<keyword id="KW-0256">Endoplasmic reticulum</keyword>
<keyword id="KW-0325">Glycoprotein</keyword>
<keyword id="KW-0408">Iron</keyword>
<keyword id="KW-0479">Metal-binding</keyword>
<keyword id="KW-0560">Oxidoreductase</keyword>
<keyword id="KW-1185">Reference proteome</keyword>
<keyword id="KW-0732">Signal</keyword>
<keyword id="KW-0802">TPR repeat</keyword>
<keyword id="KW-0847">Vitamin C</keyword>
<organism>
    <name type="scientific">Pongo abelii</name>
    <name type="common">Sumatran orangutan</name>
    <name type="synonym">Pongo pygmaeus abelii</name>
    <dbReference type="NCBI Taxonomy" id="9601"/>
    <lineage>
        <taxon>Eukaryota</taxon>
        <taxon>Metazoa</taxon>
        <taxon>Chordata</taxon>
        <taxon>Craniata</taxon>
        <taxon>Vertebrata</taxon>
        <taxon>Euteleostomi</taxon>
        <taxon>Mammalia</taxon>
        <taxon>Eutheria</taxon>
        <taxon>Euarchontoglires</taxon>
        <taxon>Primates</taxon>
        <taxon>Haplorrhini</taxon>
        <taxon>Catarrhini</taxon>
        <taxon>Hominidae</taxon>
        <taxon>Pongo</taxon>
    </lineage>
</organism>
<comment type="function">
    <text evidence="2">Catalyzes the post-translational formation of 4-hydroxyproline in -Xaa-Pro-Gly- sequences in collagens and other proteins.</text>
</comment>
<comment type="catalytic activity">
    <reaction evidence="2">
        <text>L-prolyl-[collagen] + 2-oxoglutarate + O2 = trans-4-hydroxy-L-prolyl-[collagen] + succinate + CO2</text>
        <dbReference type="Rhea" id="RHEA:18945"/>
        <dbReference type="Rhea" id="RHEA-COMP:11676"/>
        <dbReference type="Rhea" id="RHEA-COMP:11680"/>
        <dbReference type="ChEBI" id="CHEBI:15379"/>
        <dbReference type="ChEBI" id="CHEBI:16526"/>
        <dbReference type="ChEBI" id="CHEBI:16810"/>
        <dbReference type="ChEBI" id="CHEBI:30031"/>
        <dbReference type="ChEBI" id="CHEBI:50342"/>
        <dbReference type="ChEBI" id="CHEBI:61965"/>
        <dbReference type="EC" id="1.14.11.2"/>
    </reaction>
</comment>
<comment type="cofactor">
    <cofactor evidence="4">
        <name>Fe(2+)</name>
        <dbReference type="ChEBI" id="CHEBI:29033"/>
    </cofactor>
    <text evidence="4">Binds 1 Fe(2+) ion per subunit.</text>
</comment>
<comment type="cofactor">
    <cofactor evidence="2">
        <name>L-ascorbate</name>
        <dbReference type="ChEBI" id="CHEBI:38290"/>
    </cofactor>
</comment>
<comment type="subunit">
    <text evidence="2">Heterotetramer of two alpha-1 chains and two beta chains (P4HB)(the beta chain is the multi-functional PDI), where P4HB plays the role of a structural subunit; this tetramer catalyzes the formation of 4-hydroxyproline in collagen.</text>
</comment>
<comment type="subcellular location">
    <subcellularLocation>
        <location evidence="1">Endoplasmic reticulum lumen</location>
    </subcellularLocation>
</comment>
<comment type="similarity">
    <text evidence="5">Belongs to the P4HA family.</text>
</comment>
<name>P4HA1_PONAB</name>
<feature type="signal peptide" evidence="1">
    <location>
        <begin position="1"/>
        <end position="17"/>
    </location>
</feature>
<feature type="chain" id="PRO_0000041835" description="Prolyl 4-hydroxylase subunit alpha-1">
    <location>
        <begin position="18"/>
        <end position="534"/>
    </location>
</feature>
<feature type="repeat" description="TPR">
    <location>
        <begin position="205"/>
        <end position="238"/>
    </location>
</feature>
<feature type="domain" description="Fe2OG dioxygenase" evidence="4">
    <location>
        <begin position="411"/>
        <end position="519"/>
    </location>
</feature>
<feature type="binding site" evidence="4">
    <location>
        <position position="429"/>
    </location>
    <ligand>
        <name>Fe cation</name>
        <dbReference type="ChEBI" id="CHEBI:24875"/>
    </ligand>
</feature>
<feature type="binding site" evidence="4">
    <location>
        <position position="431"/>
    </location>
    <ligand>
        <name>Fe cation</name>
        <dbReference type="ChEBI" id="CHEBI:24875"/>
    </ligand>
</feature>
<feature type="binding site" evidence="4">
    <location>
        <position position="500"/>
    </location>
    <ligand>
        <name>Fe cation</name>
        <dbReference type="ChEBI" id="CHEBI:24875"/>
    </ligand>
</feature>
<feature type="binding site" evidence="4">
    <location>
        <position position="510"/>
    </location>
    <ligand>
        <name>2-oxoglutarate</name>
        <dbReference type="ChEBI" id="CHEBI:16810"/>
    </ligand>
</feature>
<feature type="glycosylation site" description="N-linked (GlcNAc...) asparagine" evidence="3">
    <location>
        <position position="113"/>
    </location>
</feature>
<feature type="glycosylation site" description="N-linked (GlcNAc...) asparagine" evidence="3">
    <location>
        <position position="259"/>
    </location>
</feature>
<protein>
    <recommendedName>
        <fullName>Prolyl 4-hydroxylase subunit alpha-1</fullName>
        <shortName>4-PH alpha-1</shortName>
        <ecNumber evidence="2">1.14.11.2</ecNumber>
    </recommendedName>
    <alternativeName>
        <fullName>Procollagen-proline,2-oxoglutarate-4-dioxygenase subunit alpha-1</fullName>
    </alternativeName>
</protein>
<dbReference type="EC" id="1.14.11.2" evidence="2"/>
<dbReference type="EMBL" id="CR859049">
    <property type="protein sequence ID" value="CAH91242.1"/>
    <property type="molecule type" value="mRNA"/>
</dbReference>
<dbReference type="EMBL" id="CR926085">
    <property type="protein sequence ID" value="CAI29712.1"/>
    <property type="molecule type" value="mRNA"/>
</dbReference>
<dbReference type="RefSeq" id="NP_001125733.1">
    <property type="nucleotide sequence ID" value="NM_001132261.2"/>
</dbReference>
<dbReference type="SMR" id="Q5RAG8"/>
<dbReference type="FunCoup" id="Q5RAG8">
    <property type="interactions" value="1899"/>
</dbReference>
<dbReference type="IntAct" id="Q5RAG8">
    <property type="interactions" value="1"/>
</dbReference>
<dbReference type="MINT" id="Q5RAG8"/>
<dbReference type="STRING" id="9601.ENSPPYP00000002727"/>
<dbReference type="GlyCosmos" id="Q5RAG8">
    <property type="glycosylation" value="2 sites, No reported glycans"/>
</dbReference>
<dbReference type="Ensembl" id="ENSPPYT00000056106.1">
    <property type="protein sequence ID" value="ENSPPYP00000043789.1"/>
    <property type="gene ID" value="ENSPPYG00000002348.3"/>
</dbReference>
<dbReference type="GeneID" id="100172658"/>
<dbReference type="KEGG" id="pon:100172658"/>
<dbReference type="CTD" id="5033"/>
<dbReference type="eggNOG" id="KOG1591">
    <property type="taxonomic scope" value="Eukaryota"/>
</dbReference>
<dbReference type="GeneTree" id="ENSGT00940000156635"/>
<dbReference type="InParanoid" id="Q5RAG8"/>
<dbReference type="OrthoDB" id="420380at2759"/>
<dbReference type="Proteomes" id="UP000001595">
    <property type="component" value="Chromosome 10"/>
</dbReference>
<dbReference type="GO" id="GO:0005788">
    <property type="term" value="C:endoplasmic reticulum lumen"/>
    <property type="evidence" value="ECO:0007669"/>
    <property type="project" value="UniProtKB-SubCell"/>
</dbReference>
<dbReference type="GO" id="GO:0005739">
    <property type="term" value="C:mitochondrion"/>
    <property type="evidence" value="ECO:0007669"/>
    <property type="project" value="Ensembl"/>
</dbReference>
<dbReference type="GO" id="GO:0042802">
    <property type="term" value="F:identical protein binding"/>
    <property type="evidence" value="ECO:0007669"/>
    <property type="project" value="Ensembl"/>
</dbReference>
<dbReference type="GO" id="GO:0005506">
    <property type="term" value="F:iron ion binding"/>
    <property type="evidence" value="ECO:0007669"/>
    <property type="project" value="InterPro"/>
</dbReference>
<dbReference type="GO" id="GO:0031418">
    <property type="term" value="F:L-ascorbic acid binding"/>
    <property type="evidence" value="ECO:0007669"/>
    <property type="project" value="UniProtKB-KW"/>
</dbReference>
<dbReference type="GO" id="GO:0004656">
    <property type="term" value="F:procollagen-proline 4-dioxygenase activity"/>
    <property type="evidence" value="ECO:0000250"/>
    <property type="project" value="UniProtKB"/>
</dbReference>
<dbReference type="FunFam" id="1.25.40.10:FF:000006">
    <property type="entry name" value="Prolyl 4-hydroxylase subunit alpha 2"/>
    <property type="match status" value="1"/>
</dbReference>
<dbReference type="FunFam" id="2.60.120.620:FF:000001">
    <property type="entry name" value="Prolyl 4-hydroxylase subunit alpha 2"/>
    <property type="match status" value="1"/>
</dbReference>
<dbReference type="Gene3D" id="6.10.140.1460">
    <property type="match status" value="1"/>
</dbReference>
<dbReference type="Gene3D" id="2.60.120.620">
    <property type="entry name" value="q2cbj1_9rhob like domain"/>
    <property type="match status" value="1"/>
</dbReference>
<dbReference type="Gene3D" id="1.25.40.10">
    <property type="entry name" value="Tetratricopeptide repeat domain"/>
    <property type="match status" value="1"/>
</dbReference>
<dbReference type="InterPro" id="IPR005123">
    <property type="entry name" value="Oxoglu/Fe-dep_dioxygenase_dom"/>
</dbReference>
<dbReference type="InterPro" id="IPR045054">
    <property type="entry name" value="P4HA-like"/>
</dbReference>
<dbReference type="InterPro" id="IPR006620">
    <property type="entry name" value="Pro_4_hyd_alph"/>
</dbReference>
<dbReference type="InterPro" id="IPR044862">
    <property type="entry name" value="Pro_4_hyd_alph_FE2OG_OXY"/>
</dbReference>
<dbReference type="InterPro" id="IPR013547">
    <property type="entry name" value="Pro_4_hyd_alph_N"/>
</dbReference>
<dbReference type="InterPro" id="IPR011990">
    <property type="entry name" value="TPR-like_helical_dom_sf"/>
</dbReference>
<dbReference type="InterPro" id="IPR019734">
    <property type="entry name" value="TPR_rpt"/>
</dbReference>
<dbReference type="PANTHER" id="PTHR10869">
    <property type="entry name" value="PROLYL 4-HYDROXYLASE ALPHA SUBUNIT"/>
    <property type="match status" value="1"/>
</dbReference>
<dbReference type="PANTHER" id="PTHR10869:SF101">
    <property type="entry name" value="PROLYL 4-HYDROXYLASE SUBUNIT ALPHA-1"/>
    <property type="match status" value="1"/>
</dbReference>
<dbReference type="Pfam" id="PF13640">
    <property type="entry name" value="2OG-FeII_Oxy_3"/>
    <property type="match status" value="1"/>
</dbReference>
<dbReference type="Pfam" id="PF08336">
    <property type="entry name" value="P4Ha_N"/>
    <property type="match status" value="1"/>
</dbReference>
<dbReference type="Pfam" id="PF23558">
    <property type="entry name" value="TPR_P4H"/>
    <property type="match status" value="1"/>
</dbReference>
<dbReference type="SMART" id="SM00702">
    <property type="entry name" value="P4Hc"/>
    <property type="match status" value="1"/>
</dbReference>
<dbReference type="SUPFAM" id="SSF48452">
    <property type="entry name" value="TPR-like"/>
    <property type="match status" value="1"/>
</dbReference>
<dbReference type="PROSITE" id="PS51471">
    <property type="entry name" value="FE2OG_OXY"/>
    <property type="match status" value="1"/>
</dbReference>
<dbReference type="PROSITE" id="PS50005">
    <property type="entry name" value="TPR"/>
    <property type="match status" value="1"/>
</dbReference>
<dbReference type="PROSITE" id="PS50293">
    <property type="entry name" value="TPR_REGION"/>
    <property type="match status" value="1"/>
</dbReference>
<proteinExistence type="evidence at transcript level"/>
<reference key="1">
    <citation type="submission" date="2004-11" db="EMBL/GenBank/DDBJ databases">
        <authorList>
            <consortium name="The German cDNA consortium"/>
        </authorList>
    </citation>
    <scope>NUCLEOTIDE SEQUENCE [LARGE SCALE MRNA]</scope>
    <source>
        <tissue>Brain cortex</tissue>
        <tissue>Heart</tissue>
    </source>
</reference>
<gene>
    <name type="primary">P4HA1</name>
</gene>
<sequence length="534" mass="61049">MIWYILIIGILLPQSLAHPGFFTSIGQMTDLIHTEKDLVTSLKDYIKAEEDKLEQIKKWAEKLDRLTSTATKDPEGFVGHPVNAFKLMKRLNTEWSELENLVLKDMSDGFISNLTIQRQYFPNDEDQVGAAKALLRLQDTYNLDTDTISKGNLPGVKHKSFLTAEDCFELGKVAYTEADYYHTELWMEQALRQLDEGEISTIDKVSVLDYLSYAVYQQGDLDKALLLTKKLLELDPEHQRANGNLKYFEYIMAKEKDVNKSASDDQSDQKTTPKKKGVAVDYLPERQKYEMLCRGEGIKMTPRRQKKLFCRYHDGNRNPKFILAPAKQEDEWDKPRIIRFHDIISDAEIEIVKDLAKPRLRRATISNPITGDLETVHYRISKSAWLSGYENPVVSRINMRIQDLTGLDVSTAEELQVANYGVGGQYEPHFDFARKDEPDAFKELGTGNRIATWLFYMSDVSAGGATVFPEVGASVWPKKGTAVFWYNLFASGEGDYSTRHAACPVLVGNKWVSNKWLHERGQEFRRPCTLSELE</sequence>